<evidence type="ECO:0000255" key="1">
    <source>
        <dbReference type="HAMAP-Rule" id="MF_00082"/>
    </source>
</evidence>
<feature type="chain" id="PRO_1000010552" description="Acetylglutamate kinase">
    <location>
        <begin position="1"/>
        <end position="258"/>
    </location>
</feature>
<feature type="binding site" evidence="1">
    <location>
        <begin position="44"/>
        <end position="45"/>
    </location>
    <ligand>
        <name>substrate</name>
    </ligand>
</feature>
<feature type="binding site" evidence="1">
    <location>
        <position position="66"/>
    </location>
    <ligand>
        <name>substrate</name>
    </ligand>
</feature>
<feature type="binding site" evidence="1">
    <location>
        <position position="158"/>
    </location>
    <ligand>
        <name>substrate</name>
    </ligand>
</feature>
<feature type="binding site" evidence="1">
    <location>
        <begin position="181"/>
        <end position="186"/>
    </location>
    <ligand>
        <name>ATP</name>
        <dbReference type="ChEBI" id="CHEBI:30616"/>
    </ligand>
</feature>
<feature type="binding site" evidence="1">
    <location>
        <begin position="209"/>
        <end position="211"/>
    </location>
    <ligand>
        <name>ATP</name>
        <dbReference type="ChEBI" id="CHEBI:30616"/>
    </ligand>
</feature>
<feature type="site" description="Transition state stabilizer" evidence="1">
    <location>
        <position position="8"/>
    </location>
</feature>
<feature type="site" description="Transition state stabilizer" evidence="1">
    <location>
        <position position="217"/>
    </location>
</feature>
<reference key="1">
    <citation type="submission" date="2007-02" db="EMBL/GenBank/DDBJ databases">
        <title>Complete sequence of chromosome of Yersinia pestis Pestoides F.</title>
        <authorList>
            <consortium name="US DOE Joint Genome Institute"/>
            <person name="Copeland A."/>
            <person name="Lucas S."/>
            <person name="Lapidus A."/>
            <person name="Barry K."/>
            <person name="Detter J.C."/>
            <person name="Glavina del Rio T."/>
            <person name="Hammon N."/>
            <person name="Israni S."/>
            <person name="Dalin E."/>
            <person name="Tice H."/>
            <person name="Pitluck S."/>
            <person name="Di Bartolo G."/>
            <person name="Chain P."/>
            <person name="Malfatti S."/>
            <person name="Shin M."/>
            <person name="Vergez L."/>
            <person name="Schmutz J."/>
            <person name="Larimer F."/>
            <person name="Land M."/>
            <person name="Hauser L."/>
            <person name="Worsham P."/>
            <person name="Chu M."/>
            <person name="Bearden S."/>
            <person name="Garcia E."/>
            <person name="Richardson P."/>
        </authorList>
    </citation>
    <scope>NUCLEOTIDE SEQUENCE [LARGE SCALE GENOMIC DNA]</scope>
    <source>
        <strain>Pestoides F</strain>
    </source>
</reference>
<organism>
    <name type="scientific">Yersinia pestis (strain Pestoides F)</name>
    <dbReference type="NCBI Taxonomy" id="386656"/>
    <lineage>
        <taxon>Bacteria</taxon>
        <taxon>Pseudomonadati</taxon>
        <taxon>Pseudomonadota</taxon>
        <taxon>Gammaproteobacteria</taxon>
        <taxon>Enterobacterales</taxon>
        <taxon>Yersiniaceae</taxon>
        <taxon>Yersinia</taxon>
    </lineage>
</organism>
<protein>
    <recommendedName>
        <fullName evidence="1">Acetylglutamate kinase</fullName>
        <ecNumber evidence="1">2.7.2.8</ecNumber>
    </recommendedName>
    <alternativeName>
        <fullName evidence="1">N-acetyl-L-glutamate 5-phosphotransferase</fullName>
    </alternativeName>
    <alternativeName>
        <fullName evidence="1">NAG kinase</fullName>
        <shortName evidence="1">NAGK</shortName>
    </alternativeName>
</protein>
<dbReference type="EC" id="2.7.2.8" evidence="1"/>
<dbReference type="EMBL" id="CP000668">
    <property type="protein sequence ID" value="ABP41886.1"/>
    <property type="molecule type" value="Genomic_DNA"/>
</dbReference>
<dbReference type="SMR" id="A4TRH4"/>
<dbReference type="KEGG" id="ypp:YPDSF_3536"/>
<dbReference type="UniPathway" id="UPA00068">
    <property type="reaction ID" value="UER00107"/>
</dbReference>
<dbReference type="GO" id="GO:0005737">
    <property type="term" value="C:cytoplasm"/>
    <property type="evidence" value="ECO:0007669"/>
    <property type="project" value="UniProtKB-SubCell"/>
</dbReference>
<dbReference type="GO" id="GO:0003991">
    <property type="term" value="F:acetylglutamate kinase activity"/>
    <property type="evidence" value="ECO:0007669"/>
    <property type="project" value="UniProtKB-UniRule"/>
</dbReference>
<dbReference type="GO" id="GO:0005524">
    <property type="term" value="F:ATP binding"/>
    <property type="evidence" value="ECO:0007669"/>
    <property type="project" value="UniProtKB-UniRule"/>
</dbReference>
<dbReference type="GO" id="GO:0042450">
    <property type="term" value="P:arginine biosynthetic process via ornithine"/>
    <property type="evidence" value="ECO:0007669"/>
    <property type="project" value="UniProtKB-UniRule"/>
</dbReference>
<dbReference type="GO" id="GO:0006526">
    <property type="term" value="P:L-arginine biosynthetic process"/>
    <property type="evidence" value="ECO:0007669"/>
    <property type="project" value="UniProtKB-UniPathway"/>
</dbReference>
<dbReference type="CDD" id="cd04249">
    <property type="entry name" value="AAK_NAGK-NC"/>
    <property type="match status" value="1"/>
</dbReference>
<dbReference type="FunFam" id="3.40.1160.10:FF:000008">
    <property type="entry name" value="Acetylglutamate kinase"/>
    <property type="match status" value="1"/>
</dbReference>
<dbReference type="Gene3D" id="3.40.1160.10">
    <property type="entry name" value="Acetylglutamate kinase-like"/>
    <property type="match status" value="1"/>
</dbReference>
<dbReference type="HAMAP" id="MF_00082">
    <property type="entry name" value="ArgB"/>
    <property type="match status" value="1"/>
</dbReference>
<dbReference type="InterPro" id="IPR036393">
    <property type="entry name" value="AceGlu_kinase-like_sf"/>
</dbReference>
<dbReference type="InterPro" id="IPR004662">
    <property type="entry name" value="AcgluKinase_fam"/>
</dbReference>
<dbReference type="InterPro" id="IPR037528">
    <property type="entry name" value="ArgB"/>
</dbReference>
<dbReference type="InterPro" id="IPR001048">
    <property type="entry name" value="Asp/Glu/Uridylate_kinase"/>
</dbReference>
<dbReference type="InterPro" id="IPR041731">
    <property type="entry name" value="NAGK-NC"/>
</dbReference>
<dbReference type="NCBIfam" id="TIGR00761">
    <property type="entry name" value="argB"/>
    <property type="match status" value="1"/>
</dbReference>
<dbReference type="PANTHER" id="PTHR23342">
    <property type="entry name" value="N-ACETYLGLUTAMATE SYNTHASE"/>
    <property type="match status" value="1"/>
</dbReference>
<dbReference type="PANTHER" id="PTHR23342:SF0">
    <property type="entry name" value="N-ACETYLGLUTAMATE SYNTHASE, MITOCHONDRIAL"/>
    <property type="match status" value="1"/>
</dbReference>
<dbReference type="Pfam" id="PF00696">
    <property type="entry name" value="AA_kinase"/>
    <property type="match status" value="1"/>
</dbReference>
<dbReference type="PIRSF" id="PIRSF000728">
    <property type="entry name" value="NAGK"/>
    <property type="match status" value="1"/>
</dbReference>
<dbReference type="SUPFAM" id="SSF53633">
    <property type="entry name" value="Carbamate kinase-like"/>
    <property type="match status" value="1"/>
</dbReference>
<proteinExistence type="inferred from homology"/>
<accession>A4TRH4</accession>
<sequence>MMNPLVIKLGGVLLDSEEALERLFTALVTYREKHERPLVIMHGGGCLVDELMKRLALPVVKKNGLRVTPADQIDIITGALAGTANKTLLAWAVKHQINAVGLCLADGNTVTVTLLDAELGHVGKAQPGSAALVQTLLAAGYMPIISSIGITVEGQLMNVNADQAATALAATLGADLILLSDVSGILDGKGQRIAEMTAQKAEQLIAQGIITDGMVVKVNAALDAARSLGRPVDIASWRHSEQLPALFNGVPIGTRISV</sequence>
<keyword id="KW-0028">Amino-acid biosynthesis</keyword>
<keyword id="KW-0055">Arginine biosynthesis</keyword>
<keyword id="KW-0067">ATP-binding</keyword>
<keyword id="KW-0963">Cytoplasm</keyword>
<keyword id="KW-0418">Kinase</keyword>
<keyword id="KW-0547">Nucleotide-binding</keyword>
<keyword id="KW-0808">Transferase</keyword>
<comment type="function">
    <text evidence="1">Catalyzes the ATP-dependent phosphorylation of N-acetyl-L-glutamate.</text>
</comment>
<comment type="catalytic activity">
    <reaction evidence="1">
        <text>N-acetyl-L-glutamate + ATP = N-acetyl-L-glutamyl 5-phosphate + ADP</text>
        <dbReference type="Rhea" id="RHEA:14629"/>
        <dbReference type="ChEBI" id="CHEBI:30616"/>
        <dbReference type="ChEBI" id="CHEBI:44337"/>
        <dbReference type="ChEBI" id="CHEBI:57936"/>
        <dbReference type="ChEBI" id="CHEBI:456216"/>
        <dbReference type="EC" id="2.7.2.8"/>
    </reaction>
</comment>
<comment type="pathway">
    <text evidence="1">Amino-acid biosynthesis; L-arginine biosynthesis; N(2)-acetyl-L-ornithine from L-glutamate: step 2/4.</text>
</comment>
<comment type="subunit">
    <text evidence="1">Homodimer.</text>
</comment>
<comment type="subcellular location">
    <subcellularLocation>
        <location evidence="1">Cytoplasm</location>
    </subcellularLocation>
</comment>
<comment type="similarity">
    <text evidence="1">Belongs to the acetylglutamate kinase family. ArgB subfamily.</text>
</comment>
<gene>
    <name evidence="1" type="primary">argB</name>
    <name type="ordered locus">YPDSF_3536</name>
</gene>
<name>ARGB_YERPP</name>